<keyword id="KW-0496">Mitochondrion</keyword>
<keyword id="KW-1185">Reference proteome</keyword>
<evidence type="ECO:0000305" key="1"/>
<evidence type="ECO:0000312" key="2">
    <source>
        <dbReference type="Araport" id="AT2G07737"/>
    </source>
</evidence>
<evidence type="ECO:0000312" key="3">
    <source>
        <dbReference type="Araport" id="ATMG00320"/>
    </source>
</evidence>
<feature type="chain" id="PRO_0000196766" description="Uncharacterized mitochondrial protein AtMg00320">
    <location>
        <begin position="1"/>
        <end position="127"/>
    </location>
</feature>
<geneLocation type="mitochondrion"/>
<name>M320_ARATH</name>
<reference key="1">
    <citation type="journal article" date="1997" name="Nat. Genet.">
        <title>The mitochondrial genome of Arabidopsis thaliana contains 57 genes in 366,924 nucleotides.</title>
        <authorList>
            <person name="Unseld M."/>
            <person name="Marienfeld J.R."/>
            <person name="Brandt P."/>
            <person name="Brennicke A."/>
        </authorList>
    </citation>
    <scope>NUCLEOTIDE SEQUENCE [LARGE SCALE GENOMIC DNA]</scope>
    <source>
        <strain>cv. C24</strain>
    </source>
</reference>
<reference key="2">
    <citation type="journal article" date="2018" name="Plant Cell">
        <title>Correction of persistent errors in Arabidopsis reference mitochondrial genomes.</title>
        <authorList>
            <person name="Sloan D.B."/>
            <person name="Wu Z."/>
            <person name="Sharbrough J."/>
        </authorList>
    </citation>
    <scope>NUCLEOTIDE SEQUENCE [LARGE SCALE GENOMIC DNA]</scope>
    <source>
        <strain>cv. Columbia</strain>
    </source>
</reference>
<reference key="3">
    <citation type="journal article" date="1999" name="Nature">
        <title>Sequence and analysis of chromosome 2 of the plant Arabidopsis thaliana.</title>
        <authorList>
            <person name="Lin X."/>
            <person name="Kaul S."/>
            <person name="Rounsley S.D."/>
            <person name="Shea T.P."/>
            <person name="Benito M.-I."/>
            <person name="Town C.D."/>
            <person name="Fujii C.Y."/>
            <person name="Mason T.M."/>
            <person name="Bowman C.L."/>
            <person name="Barnstead M.E."/>
            <person name="Feldblyum T.V."/>
            <person name="Buell C.R."/>
            <person name="Ketchum K.A."/>
            <person name="Lee J.J."/>
            <person name="Ronning C.M."/>
            <person name="Koo H.L."/>
            <person name="Moffat K.S."/>
            <person name="Cronin L.A."/>
            <person name="Shen M."/>
            <person name="Pai G."/>
            <person name="Van Aken S."/>
            <person name="Umayam L."/>
            <person name="Tallon L.J."/>
            <person name="Gill J.E."/>
            <person name="Adams M.D."/>
            <person name="Carrera A.J."/>
            <person name="Creasy T.H."/>
            <person name="Goodman H.M."/>
            <person name="Somerville C.R."/>
            <person name="Copenhaver G.P."/>
            <person name="Preuss D."/>
            <person name="Nierman W.C."/>
            <person name="White O."/>
            <person name="Eisen J.A."/>
            <person name="Salzberg S.L."/>
            <person name="Fraser C.M."/>
            <person name="Venter J.C."/>
        </authorList>
    </citation>
    <scope>NUCLEOTIDE SEQUENCE [LARGE SCALE GENOMIC DNA] (AT2G07737)</scope>
    <source>
        <strain>cv. Columbia</strain>
    </source>
</reference>
<reference key="4">
    <citation type="journal article" date="2017" name="Plant J.">
        <title>Araport11: a complete reannotation of the Arabidopsis thaliana reference genome.</title>
        <authorList>
            <person name="Cheng C.Y."/>
            <person name="Krishnakumar V."/>
            <person name="Chan A.P."/>
            <person name="Thibaud-Nissen F."/>
            <person name="Schobel S."/>
            <person name="Town C.D."/>
        </authorList>
    </citation>
    <scope>GENOME REANNOTATION (AT2G07737)</scope>
    <source>
        <strain>cv. Columbia</strain>
    </source>
</reference>
<organism>
    <name type="scientific">Arabidopsis thaliana</name>
    <name type="common">Mouse-ear cress</name>
    <dbReference type="NCBI Taxonomy" id="3702"/>
    <lineage>
        <taxon>Eukaryota</taxon>
        <taxon>Viridiplantae</taxon>
        <taxon>Streptophyta</taxon>
        <taxon>Embryophyta</taxon>
        <taxon>Tracheophyta</taxon>
        <taxon>Spermatophyta</taxon>
        <taxon>Magnoliopsida</taxon>
        <taxon>eudicotyledons</taxon>
        <taxon>Gunneridae</taxon>
        <taxon>Pentapetalae</taxon>
        <taxon>rosids</taxon>
        <taxon>malvids</taxon>
        <taxon>Brassicales</taxon>
        <taxon>Brassicaceae</taxon>
        <taxon>Camelineae</taxon>
        <taxon>Arabidopsis</taxon>
    </lineage>
</organism>
<proteinExistence type="predicted"/>
<dbReference type="EMBL" id="Y08501">
    <property type="protein sequence ID" value="CAA69774.1"/>
    <property type="molecule type" value="Genomic_DNA"/>
</dbReference>
<dbReference type="EMBL" id="BK010421">
    <property type="status" value="NOT_ANNOTATED_CDS"/>
    <property type="molecule type" value="Genomic_DNA"/>
</dbReference>
<dbReference type="EMBL" id="AC006225">
    <property type="status" value="NOT_ANNOTATED_CDS"/>
    <property type="molecule type" value="Genomic_DNA"/>
</dbReference>
<dbReference type="EMBL" id="CP002685">
    <property type="status" value="NOT_ANNOTATED_CDS"/>
    <property type="molecule type" value="Genomic_DNA"/>
</dbReference>
<dbReference type="RefSeq" id="NP_085500.1">
    <property type="nucleotide sequence ID" value="NC_001284.2"/>
</dbReference>
<dbReference type="STRING" id="3702.P93294"/>
<dbReference type="PaxDb" id="3702-ATMG00320.1"/>
<dbReference type="EnsemblPlants" id="ATMG00320.1">
    <property type="protein sequence ID" value="ATMG00320.1"/>
    <property type="gene ID" value="ATMG00320"/>
</dbReference>
<dbReference type="Gramene" id="ATMG00320.1">
    <property type="protein sequence ID" value="ATMG00320.1"/>
    <property type="gene ID" value="ATMG00320"/>
</dbReference>
<dbReference type="Araport" id="AT2G07737"/>
<dbReference type="Araport" id="ATMG00320"/>
<dbReference type="TAIR" id="AT2G07737"/>
<dbReference type="TAIR" id="ATMG00320">
    <property type="gene designation" value="ORF127"/>
</dbReference>
<dbReference type="HOGENOM" id="CLU_1973558_0_0_1"/>
<dbReference type="InParanoid" id="P93294"/>
<dbReference type="Proteomes" id="UP000006548">
    <property type="component" value="Chromosome 2"/>
</dbReference>
<dbReference type="Proteomes" id="UP000006548">
    <property type="component" value="Mitochondrion MT"/>
</dbReference>
<dbReference type="GO" id="GO:0005739">
    <property type="term" value="C:mitochondrion"/>
    <property type="evidence" value="ECO:0007669"/>
    <property type="project" value="UniProtKB-SubCell"/>
</dbReference>
<gene>
    <name evidence="3" type="ordered locus">AtMg00320</name>
</gene>
<gene>
    <name evidence="2" type="ordered locus">At2g07737</name>
</gene>
<protein>
    <recommendedName>
        <fullName>Uncharacterized mitochondrial protein AtMg00320</fullName>
    </recommendedName>
    <alternativeName>
        <fullName>ORF127</fullName>
    </alternativeName>
</protein>
<sequence length="127" mass="14535">MILLQAYEGLVPTLHSIIELCGKYRLRRSRDSSVCGWCIIRKDCFARRAWLNQPKSRKPKPPSSSLDLHNFCQATHEIFLLFSQELHQNSVIALVNFLHSSFESRKHDIAYTGKAIAIDFSSTSFPP</sequence>
<accession>P93294</accession>
<comment type="subcellular location">
    <subcellularLocation>
        <location evidence="1">Mitochondrion</location>
    </subcellularLocation>
</comment>
<comment type="miscellaneous">
    <text>A stretch of 270 kb of the mitochondrial genome is duplicated within the centromere of chromosome 2 resulting in the duplication of the gene. The expression of the duplicated gene (At2g07737) is not demonstrated.</text>
</comment>